<keyword id="KW-0067">ATP-binding</keyword>
<keyword id="KW-0963">Cytoplasm</keyword>
<keyword id="KW-1015">Disulfide bond</keyword>
<keyword id="KW-0547">Nucleotide-binding</keyword>
<keyword id="KW-0676">Redox-active center</keyword>
<keyword id="KW-0694">RNA-binding</keyword>
<keyword id="KW-0784">Thiamine biosynthesis</keyword>
<keyword id="KW-0808">Transferase</keyword>
<keyword id="KW-0820">tRNA-binding</keyword>
<reference key="1">
    <citation type="submission" date="2007-06" db="EMBL/GenBank/DDBJ databases">
        <authorList>
            <person name="Dodson R.J."/>
            <person name="Harkins D."/>
            <person name="Paulsen I.T."/>
        </authorList>
    </citation>
    <scope>NUCLEOTIDE SEQUENCE [LARGE SCALE GENOMIC DNA]</scope>
    <source>
        <strain>DSM 24068 / PA7</strain>
    </source>
</reference>
<gene>
    <name evidence="1" type="primary">thiI</name>
    <name type="ordered locus">PSPA7_5851</name>
</gene>
<evidence type="ECO:0000255" key="1">
    <source>
        <dbReference type="HAMAP-Rule" id="MF_00021"/>
    </source>
</evidence>
<feature type="chain" id="PRO_1000074250" description="tRNA sulfurtransferase">
    <location>
        <begin position="1"/>
        <end position="484"/>
    </location>
</feature>
<feature type="domain" description="THUMP" evidence="1">
    <location>
        <begin position="63"/>
        <end position="167"/>
    </location>
</feature>
<feature type="domain" description="Rhodanese" evidence="1">
    <location>
        <begin position="405"/>
        <end position="483"/>
    </location>
</feature>
<feature type="active site" description="Cysteine persulfide intermediate" evidence="1">
    <location>
        <position position="457"/>
    </location>
</feature>
<feature type="binding site" evidence="1">
    <location>
        <begin position="185"/>
        <end position="186"/>
    </location>
    <ligand>
        <name>ATP</name>
        <dbReference type="ChEBI" id="CHEBI:30616"/>
    </ligand>
</feature>
<feature type="binding site" evidence="1">
    <location>
        <position position="267"/>
    </location>
    <ligand>
        <name>ATP</name>
        <dbReference type="ChEBI" id="CHEBI:30616"/>
    </ligand>
</feature>
<feature type="binding site" evidence="1">
    <location>
        <position position="289"/>
    </location>
    <ligand>
        <name>ATP</name>
        <dbReference type="ChEBI" id="CHEBI:30616"/>
    </ligand>
</feature>
<feature type="binding site" evidence="1">
    <location>
        <position position="298"/>
    </location>
    <ligand>
        <name>ATP</name>
        <dbReference type="ChEBI" id="CHEBI:30616"/>
    </ligand>
</feature>
<feature type="disulfide bond" description="Redox-active" evidence="1">
    <location>
        <begin position="346"/>
        <end position="457"/>
    </location>
</feature>
<organism>
    <name type="scientific">Pseudomonas paraeruginosa (strain DSM 24068 / PA7)</name>
    <name type="common">Pseudomonas aeruginosa (strain PA7)</name>
    <dbReference type="NCBI Taxonomy" id="381754"/>
    <lineage>
        <taxon>Bacteria</taxon>
        <taxon>Pseudomonadati</taxon>
        <taxon>Pseudomonadota</taxon>
        <taxon>Gammaproteobacteria</taxon>
        <taxon>Pseudomonadales</taxon>
        <taxon>Pseudomonadaceae</taxon>
        <taxon>Pseudomonas</taxon>
        <taxon>Pseudomonas paraeruginosa</taxon>
    </lineage>
</organism>
<proteinExistence type="inferred from homology"/>
<comment type="function">
    <text evidence="1">Catalyzes the ATP-dependent transfer of a sulfur to tRNA to produce 4-thiouridine in position 8 of tRNAs, which functions as a near-UV photosensor. Also catalyzes the transfer of sulfur to the sulfur carrier protein ThiS, forming ThiS-thiocarboxylate. This is a step in the synthesis of thiazole, in the thiamine biosynthesis pathway. The sulfur is donated as persulfide by IscS.</text>
</comment>
<comment type="catalytic activity">
    <reaction evidence="1">
        <text>[ThiI sulfur-carrier protein]-S-sulfanyl-L-cysteine + a uridine in tRNA + 2 reduced [2Fe-2S]-[ferredoxin] + ATP + H(+) = [ThiI sulfur-carrier protein]-L-cysteine + a 4-thiouridine in tRNA + 2 oxidized [2Fe-2S]-[ferredoxin] + AMP + diphosphate</text>
        <dbReference type="Rhea" id="RHEA:24176"/>
        <dbReference type="Rhea" id="RHEA-COMP:10000"/>
        <dbReference type="Rhea" id="RHEA-COMP:10001"/>
        <dbReference type="Rhea" id="RHEA-COMP:13337"/>
        <dbReference type="Rhea" id="RHEA-COMP:13338"/>
        <dbReference type="Rhea" id="RHEA-COMP:13339"/>
        <dbReference type="Rhea" id="RHEA-COMP:13340"/>
        <dbReference type="ChEBI" id="CHEBI:15378"/>
        <dbReference type="ChEBI" id="CHEBI:29950"/>
        <dbReference type="ChEBI" id="CHEBI:30616"/>
        <dbReference type="ChEBI" id="CHEBI:33019"/>
        <dbReference type="ChEBI" id="CHEBI:33737"/>
        <dbReference type="ChEBI" id="CHEBI:33738"/>
        <dbReference type="ChEBI" id="CHEBI:61963"/>
        <dbReference type="ChEBI" id="CHEBI:65315"/>
        <dbReference type="ChEBI" id="CHEBI:136798"/>
        <dbReference type="ChEBI" id="CHEBI:456215"/>
        <dbReference type="EC" id="2.8.1.4"/>
    </reaction>
</comment>
<comment type="catalytic activity">
    <reaction evidence="1">
        <text>[ThiS sulfur-carrier protein]-C-terminal Gly-Gly-AMP + S-sulfanyl-L-cysteinyl-[cysteine desulfurase] + AH2 = [ThiS sulfur-carrier protein]-C-terminal-Gly-aminoethanethioate + L-cysteinyl-[cysteine desulfurase] + A + AMP + 2 H(+)</text>
        <dbReference type="Rhea" id="RHEA:43340"/>
        <dbReference type="Rhea" id="RHEA-COMP:12157"/>
        <dbReference type="Rhea" id="RHEA-COMP:12158"/>
        <dbReference type="Rhea" id="RHEA-COMP:12910"/>
        <dbReference type="Rhea" id="RHEA-COMP:19908"/>
        <dbReference type="ChEBI" id="CHEBI:13193"/>
        <dbReference type="ChEBI" id="CHEBI:15378"/>
        <dbReference type="ChEBI" id="CHEBI:17499"/>
        <dbReference type="ChEBI" id="CHEBI:29950"/>
        <dbReference type="ChEBI" id="CHEBI:61963"/>
        <dbReference type="ChEBI" id="CHEBI:90618"/>
        <dbReference type="ChEBI" id="CHEBI:232372"/>
        <dbReference type="ChEBI" id="CHEBI:456215"/>
    </reaction>
</comment>
<comment type="pathway">
    <text evidence="1">Cofactor biosynthesis; thiamine diphosphate biosynthesis.</text>
</comment>
<comment type="subcellular location">
    <subcellularLocation>
        <location evidence="1">Cytoplasm</location>
    </subcellularLocation>
</comment>
<comment type="similarity">
    <text evidence="1">Belongs to the ThiI family.</text>
</comment>
<accession>A6VDN5</accession>
<dbReference type="EC" id="2.8.1.4" evidence="1"/>
<dbReference type="EMBL" id="CP000744">
    <property type="protein sequence ID" value="ABR86317.1"/>
    <property type="molecule type" value="Genomic_DNA"/>
</dbReference>
<dbReference type="RefSeq" id="WP_012077772.1">
    <property type="nucleotide sequence ID" value="NC_009656.1"/>
</dbReference>
<dbReference type="SMR" id="A6VDN5"/>
<dbReference type="KEGG" id="pap:PSPA7_5851"/>
<dbReference type="HOGENOM" id="CLU_037952_4_1_6"/>
<dbReference type="UniPathway" id="UPA00060"/>
<dbReference type="Proteomes" id="UP000001582">
    <property type="component" value="Chromosome"/>
</dbReference>
<dbReference type="GO" id="GO:0005829">
    <property type="term" value="C:cytosol"/>
    <property type="evidence" value="ECO:0007669"/>
    <property type="project" value="TreeGrafter"/>
</dbReference>
<dbReference type="GO" id="GO:0005524">
    <property type="term" value="F:ATP binding"/>
    <property type="evidence" value="ECO:0007669"/>
    <property type="project" value="UniProtKB-UniRule"/>
</dbReference>
<dbReference type="GO" id="GO:0004810">
    <property type="term" value="F:CCA tRNA nucleotidyltransferase activity"/>
    <property type="evidence" value="ECO:0007669"/>
    <property type="project" value="InterPro"/>
</dbReference>
<dbReference type="GO" id="GO:0000049">
    <property type="term" value="F:tRNA binding"/>
    <property type="evidence" value="ECO:0007669"/>
    <property type="project" value="UniProtKB-UniRule"/>
</dbReference>
<dbReference type="GO" id="GO:0140741">
    <property type="term" value="F:tRNA-uracil-4 sulfurtransferase activity"/>
    <property type="evidence" value="ECO:0007669"/>
    <property type="project" value="UniProtKB-EC"/>
</dbReference>
<dbReference type="GO" id="GO:0009228">
    <property type="term" value="P:thiamine biosynthetic process"/>
    <property type="evidence" value="ECO:0007669"/>
    <property type="project" value="UniProtKB-KW"/>
</dbReference>
<dbReference type="GO" id="GO:0009229">
    <property type="term" value="P:thiamine diphosphate biosynthetic process"/>
    <property type="evidence" value="ECO:0007669"/>
    <property type="project" value="UniProtKB-UniRule"/>
</dbReference>
<dbReference type="GO" id="GO:0052837">
    <property type="term" value="P:thiazole biosynthetic process"/>
    <property type="evidence" value="ECO:0007669"/>
    <property type="project" value="InterPro"/>
</dbReference>
<dbReference type="GO" id="GO:0002937">
    <property type="term" value="P:tRNA 4-thiouridine biosynthesis"/>
    <property type="evidence" value="ECO:0007669"/>
    <property type="project" value="TreeGrafter"/>
</dbReference>
<dbReference type="CDD" id="cd01712">
    <property type="entry name" value="PPase_ThiI"/>
    <property type="match status" value="1"/>
</dbReference>
<dbReference type="CDD" id="cd11716">
    <property type="entry name" value="THUMP_ThiI"/>
    <property type="match status" value="1"/>
</dbReference>
<dbReference type="FunFam" id="3.40.50.620:FF:000029">
    <property type="entry name" value="tRNA sulfurtransferase"/>
    <property type="match status" value="1"/>
</dbReference>
<dbReference type="Gene3D" id="3.30.2130.30">
    <property type="match status" value="1"/>
</dbReference>
<dbReference type="Gene3D" id="3.40.50.620">
    <property type="entry name" value="HUPs"/>
    <property type="match status" value="1"/>
</dbReference>
<dbReference type="Gene3D" id="3.40.250.10">
    <property type="entry name" value="Rhodanese-like domain"/>
    <property type="match status" value="1"/>
</dbReference>
<dbReference type="HAMAP" id="MF_00021">
    <property type="entry name" value="ThiI"/>
    <property type="match status" value="1"/>
</dbReference>
<dbReference type="InterPro" id="IPR001763">
    <property type="entry name" value="Rhodanese-like_dom"/>
</dbReference>
<dbReference type="InterPro" id="IPR036873">
    <property type="entry name" value="Rhodanese-like_dom_sf"/>
</dbReference>
<dbReference type="InterPro" id="IPR014729">
    <property type="entry name" value="Rossmann-like_a/b/a_fold"/>
</dbReference>
<dbReference type="InterPro" id="IPR020536">
    <property type="entry name" value="ThiI_AANH"/>
</dbReference>
<dbReference type="InterPro" id="IPR054173">
    <property type="entry name" value="ThiI_fer"/>
</dbReference>
<dbReference type="InterPro" id="IPR049961">
    <property type="entry name" value="ThiI_N"/>
</dbReference>
<dbReference type="InterPro" id="IPR026340">
    <property type="entry name" value="THII_Thiazole_biosynth_dom"/>
</dbReference>
<dbReference type="InterPro" id="IPR004114">
    <property type="entry name" value="THUMP_dom"/>
</dbReference>
<dbReference type="InterPro" id="IPR049962">
    <property type="entry name" value="THUMP_ThiI"/>
</dbReference>
<dbReference type="InterPro" id="IPR003720">
    <property type="entry name" value="tRNA_STrfase"/>
</dbReference>
<dbReference type="InterPro" id="IPR050102">
    <property type="entry name" value="tRNA_sulfurtransferase_ThiI"/>
</dbReference>
<dbReference type="NCBIfam" id="TIGR04271">
    <property type="entry name" value="ThiI_C_thiazole"/>
    <property type="match status" value="1"/>
</dbReference>
<dbReference type="NCBIfam" id="TIGR00342">
    <property type="entry name" value="tRNA uracil 4-sulfurtransferase ThiI"/>
    <property type="match status" value="1"/>
</dbReference>
<dbReference type="PANTHER" id="PTHR43209">
    <property type="entry name" value="TRNA SULFURTRANSFERASE"/>
    <property type="match status" value="1"/>
</dbReference>
<dbReference type="PANTHER" id="PTHR43209:SF1">
    <property type="entry name" value="TRNA SULFURTRANSFERASE"/>
    <property type="match status" value="1"/>
</dbReference>
<dbReference type="Pfam" id="PF02568">
    <property type="entry name" value="ThiI"/>
    <property type="match status" value="1"/>
</dbReference>
<dbReference type="Pfam" id="PF22025">
    <property type="entry name" value="ThiI_fer"/>
    <property type="match status" value="1"/>
</dbReference>
<dbReference type="Pfam" id="PF02926">
    <property type="entry name" value="THUMP"/>
    <property type="match status" value="1"/>
</dbReference>
<dbReference type="SMART" id="SM00981">
    <property type="entry name" value="THUMP"/>
    <property type="match status" value="1"/>
</dbReference>
<dbReference type="SUPFAM" id="SSF52402">
    <property type="entry name" value="Adenine nucleotide alpha hydrolases-like"/>
    <property type="match status" value="1"/>
</dbReference>
<dbReference type="SUPFAM" id="SSF52821">
    <property type="entry name" value="Rhodanese/Cell cycle control phosphatase"/>
    <property type="match status" value="1"/>
</dbReference>
<dbReference type="SUPFAM" id="SSF143437">
    <property type="entry name" value="THUMP domain-like"/>
    <property type="match status" value="1"/>
</dbReference>
<dbReference type="PROSITE" id="PS50206">
    <property type="entry name" value="RHODANESE_3"/>
    <property type="match status" value="1"/>
</dbReference>
<dbReference type="PROSITE" id="PS51165">
    <property type="entry name" value="THUMP"/>
    <property type="match status" value="1"/>
</dbReference>
<name>THII_PSEP7</name>
<sequence>MKLIVKTFQEITIKSRPVRKRFIRQLAKNIRAVLRDLDPELKVEGEWDNLEVETAVVDARVRREMIERLTCTPGIGHFLEVHEYPLGDFDDILAKCKAHFGDQLAGKMFAVRCKRAGKHAFTSMEVERYVGSGLRRECGAAGIDLKQPEVEVRMEIRLDRLFVIHRQHPGLGGYPLGALEQVLVLMSGGFDSTVAAYQMMRRGMISHFVFFNLGGRAHELGVMEVAHYLWEKYGRSQRVLFVSVPFEEVVGEILTKVDDSYMGVTLKRMMLRAASRVAERLELDALVTGEAISQVSSQTLPNLSVIDRVTDTLVLRPLIVSHKQDIIDTARQIGTAEFARHMPEYCGVISVNPTTQAKPYRVEHEESKFDMAVLERALERATQRTVDRVIDELGQDLSVEEVAEVLPGQIVIDIRHPDAQEDEPLALEGVEVQALPFYAINSRFKELDANRQYLLYCDKGVMSRLHAHHLLNEGHTNVRVYRPA</sequence>
<protein>
    <recommendedName>
        <fullName evidence="1">tRNA sulfurtransferase</fullName>
        <ecNumber evidence="1">2.8.1.4</ecNumber>
    </recommendedName>
    <alternativeName>
        <fullName evidence="1">Sulfur carrier protein ThiS sulfurtransferase</fullName>
    </alternativeName>
    <alternativeName>
        <fullName evidence="1">Thiamine biosynthesis protein ThiI</fullName>
    </alternativeName>
    <alternativeName>
        <fullName evidence="1">tRNA 4-thiouridine synthase</fullName>
    </alternativeName>
</protein>